<organism>
    <name type="scientific">Francisella tularensis subsp. tularensis (strain SCHU S4 / Schu 4)</name>
    <dbReference type="NCBI Taxonomy" id="177416"/>
    <lineage>
        <taxon>Bacteria</taxon>
        <taxon>Pseudomonadati</taxon>
        <taxon>Pseudomonadota</taxon>
        <taxon>Gammaproteobacteria</taxon>
        <taxon>Thiotrichales</taxon>
        <taxon>Francisellaceae</taxon>
        <taxon>Francisella</taxon>
    </lineage>
</organism>
<reference key="1">
    <citation type="journal article" date="2005" name="Nat. Genet.">
        <title>The complete genome sequence of Francisella tularensis, the causative agent of tularemia.</title>
        <authorList>
            <person name="Larsson P."/>
            <person name="Oyston P.C.F."/>
            <person name="Chain P."/>
            <person name="Chu M.C."/>
            <person name="Duffield M."/>
            <person name="Fuxelius H.-H."/>
            <person name="Garcia E."/>
            <person name="Haelltorp G."/>
            <person name="Johansson D."/>
            <person name="Isherwood K.E."/>
            <person name="Karp P.D."/>
            <person name="Larsson E."/>
            <person name="Liu Y."/>
            <person name="Michell S."/>
            <person name="Prior J."/>
            <person name="Prior R."/>
            <person name="Malfatti S."/>
            <person name="Sjoestedt A."/>
            <person name="Svensson K."/>
            <person name="Thompson N."/>
            <person name="Vergez L."/>
            <person name="Wagg J.K."/>
            <person name="Wren B.W."/>
            <person name="Lindler L.E."/>
            <person name="Andersson S.G.E."/>
            <person name="Forsman M."/>
            <person name="Titball R.W."/>
        </authorList>
    </citation>
    <scope>NUCLEOTIDE SEQUENCE [LARGE SCALE GENOMIC DNA]</scope>
    <source>
        <strain>SCHU S4 / Schu 4</strain>
    </source>
</reference>
<evidence type="ECO:0000255" key="1">
    <source>
        <dbReference type="HAMAP-Rule" id="MF_01274"/>
    </source>
</evidence>
<feature type="chain" id="PRO_0000267533" description="Type III pantothenate kinase 2">
    <location>
        <begin position="1"/>
        <end position="256"/>
    </location>
</feature>
<feature type="active site" description="Proton acceptor" evidence="1">
    <location>
        <position position="109"/>
    </location>
</feature>
<feature type="binding site" evidence="1">
    <location>
        <begin position="6"/>
        <end position="13"/>
    </location>
    <ligand>
        <name>ATP</name>
        <dbReference type="ChEBI" id="CHEBI:30616"/>
    </ligand>
</feature>
<feature type="binding site" evidence="1">
    <location>
        <begin position="107"/>
        <end position="110"/>
    </location>
    <ligand>
        <name>substrate</name>
    </ligand>
</feature>
<feature type="binding site" evidence="1">
    <location>
        <position position="130"/>
    </location>
    <ligand>
        <name>K(+)</name>
        <dbReference type="ChEBI" id="CHEBI:29103"/>
    </ligand>
</feature>
<feature type="binding site" evidence="1">
    <location>
        <position position="133"/>
    </location>
    <ligand>
        <name>ATP</name>
        <dbReference type="ChEBI" id="CHEBI:30616"/>
    </ligand>
</feature>
<feature type="binding site" evidence="1">
    <location>
        <position position="185"/>
    </location>
    <ligand>
        <name>substrate</name>
    </ligand>
</feature>
<comment type="function">
    <text evidence="1">Catalyzes the phosphorylation of pantothenate (Pan), the first step in CoA biosynthesis.</text>
</comment>
<comment type="catalytic activity">
    <reaction evidence="1">
        <text>(R)-pantothenate + ATP = (R)-4'-phosphopantothenate + ADP + H(+)</text>
        <dbReference type="Rhea" id="RHEA:16373"/>
        <dbReference type="ChEBI" id="CHEBI:10986"/>
        <dbReference type="ChEBI" id="CHEBI:15378"/>
        <dbReference type="ChEBI" id="CHEBI:29032"/>
        <dbReference type="ChEBI" id="CHEBI:30616"/>
        <dbReference type="ChEBI" id="CHEBI:456216"/>
        <dbReference type="EC" id="2.7.1.33"/>
    </reaction>
</comment>
<comment type="cofactor">
    <cofactor evidence="1">
        <name>NH4(+)</name>
        <dbReference type="ChEBI" id="CHEBI:28938"/>
    </cofactor>
    <cofactor evidence="1">
        <name>K(+)</name>
        <dbReference type="ChEBI" id="CHEBI:29103"/>
    </cofactor>
    <text evidence="1">A monovalent cation. Ammonium or potassium.</text>
</comment>
<comment type="pathway">
    <text evidence="1">Cofactor biosynthesis; coenzyme A biosynthesis; CoA from (R)-pantothenate: step 1/5.</text>
</comment>
<comment type="subunit">
    <text evidence="1">Homodimer.</text>
</comment>
<comment type="subcellular location">
    <subcellularLocation>
        <location evidence="1">Cytoplasm</location>
    </subcellularLocation>
</comment>
<comment type="similarity">
    <text evidence="1">Belongs to the type III pantothenate kinase family.</text>
</comment>
<proteinExistence type="inferred from homology"/>
<protein>
    <recommendedName>
        <fullName evidence="1">Type III pantothenate kinase 2</fullName>
        <ecNumber evidence="1">2.7.1.33</ecNumber>
    </recommendedName>
    <alternativeName>
        <fullName evidence="1">PanK-III 2</fullName>
    </alternativeName>
    <alternativeName>
        <fullName evidence="1">Pantothenic acid kinase 2</fullName>
    </alternativeName>
</protein>
<dbReference type="EC" id="2.7.1.33" evidence="1"/>
<dbReference type="EMBL" id="AJ749949">
    <property type="protein sequence ID" value="CAG46025.1"/>
    <property type="molecule type" value="Genomic_DNA"/>
</dbReference>
<dbReference type="RefSeq" id="WP_003015105.1">
    <property type="nucleotide sequence ID" value="NZ_CP010290.1"/>
</dbReference>
<dbReference type="RefSeq" id="YP_170337.1">
    <property type="nucleotide sequence ID" value="NC_006570.2"/>
</dbReference>
<dbReference type="SMR" id="Q5NF55"/>
<dbReference type="STRING" id="177416.FTT_1392"/>
<dbReference type="DNASU" id="3191493"/>
<dbReference type="EnsemblBacteria" id="CAG46025">
    <property type="protein sequence ID" value="CAG46025"/>
    <property type="gene ID" value="FTT_1392"/>
</dbReference>
<dbReference type="KEGG" id="ftu:FTT_1392"/>
<dbReference type="eggNOG" id="COG1521">
    <property type="taxonomic scope" value="Bacteria"/>
</dbReference>
<dbReference type="OrthoDB" id="9781305at2"/>
<dbReference type="UniPathway" id="UPA00241">
    <property type="reaction ID" value="UER00352"/>
</dbReference>
<dbReference type="Proteomes" id="UP000001174">
    <property type="component" value="Chromosome"/>
</dbReference>
<dbReference type="GO" id="GO:0005737">
    <property type="term" value="C:cytoplasm"/>
    <property type="evidence" value="ECO:0007669"/>
    <property type="project" value="UniProtKB-SubCell"/>
</dbReference>
<dbReference type="GO" id="GO:0005524">
    <property type="term" value="F:ATP binding"/>
    <property type="evidence" value="ECO:0007669"/>
    <property type="project" value="UniProtKB-UniRule"/>
</dbReference>
<dbReference type="GO" id="GO:0046872">
    <property type="term" value="F:metal ion binding"/>
    <property type="evidence" value="ECO:0007669"/>
    <property type="project" value="UniProtKB-KW"/>
</dbReference>
<dbReference type="GO" id="GO:0004594">
    <property type="term" value="F:pantothenate kinase activity"/>
    <property type="evidence" value="ECO:0007669"/>
    <property type="project" value="UniProtKB-UniRule"/>
</dbReference>
<dbReference type="GO" id="GO:0015937">
    <property type="term" value="P:coenzyme A biosynthetic process"/>
    <property type="evidence" value="ECO:0007669"/>
    <property type="project" value="UniProtKB-UniRule"/>
</dbReference>
<dbReference type="CDD" id="cd24015">
    <property type="entry name" value="ASKHA_NBD_PanK-III"/>
    <property type="match status" value="1"/>
</dbReference>
<dbReference type="Gene3D" id="3.30.420.40">
    <property type="match status" value="2"/>
</dbReference>
<dbReference type="HAMAP" id="MF_01274">
    <property type="entry name" value="Pantothen_kinase_3"/>
    <property type="match status" value="1"/>
</dbReference>
<dbReference type="InterPro" id="IPR043129">
    <property type="entry name" value="ATPase_NBD"/>
</dbReference>
<dbReference type="InterPro" id="IPR004619">
    <property type="entry name" value="Type_III_PanK"/>
</dbReference>
<dbReference type="NCBIfam" id="TIGR00671">
    <property type="entry name" value="baf"/>
    <property type="match status" value="1"/>
</dbReference>
<dbReference type="NCBIfam" id="NF009855">
    <property type="entry name" value="PRK13321.1"/>
    <property type="match status" value="1"/>
</dbReference>
<dbReference type="PANTHER" id="PTHR34265">
    <property type="entry name" value="TYPE III PANTOTHENATE KINASE"/>
    <property type="match status" value="1"/>
</dbReference>
<dbReference type="PANTHER" id="PTHR34265:SF1">
    <property type="entry name" value="TYPE III PANTOTHENATE KINASE"/>
    <property type="match status" value="1"/>
</dbReference>
<dbReference type="Pfam" id="PF03309">
    <property type="entry name" value="Pan_kinase"/>
    <property type="match status" value="1"/>
</dbReference>
<dbReference type="SUPFAM" id="SSF53067">
    <property type="entry name" value="Actin-like ATPase domain"/>
    <property type="match status" value="2"/>
</dbReference>
<keyword id="KW-0067">ATP-binding</keyword>
<keyword id="KW-0173">Coenzyme A biosynthesis</keyword>
<keyword id="KW-0963">Cytoplasm</keyword>
<keyword id="KW-0418">Kinase</keyword>
<keyword id="KW-0479">Metal-binding</keyword>
<keyword id="KW-0547">Nucleotide-binding</keyword>
<keyword id="KW-0630">Potassium</keyword>
<keyword id="KW-1185">Reference proteome</keyword>
<keyword id="KW-0808">Transferase</keyword>
<gene>
    <name evidence="1" type="primary">coaX2</name>
    <name type="ordered locus">FTT_1392</name>
</gene>
<accession>Q5NF55</accession>
<sequence length="256" mass="27922">MIVCIDIGNSHIFGGVFVGDQIKHNFRYPSTTPCTSDTLGIFLLSFFERKKLDIEDIEAVVLSSVVLHLEYSVNSACKKYLGITPLELKPGVKTGLKLDIKNPLDLGADRVANSVAAISLFPSRNIIVVDFGTATTICAISENKTYIGGAILPGINLSMESLSQKTAKLSNVTISHPSSALGKTTISQIQSGLIYGQLGAIKEIINRISQENFIDKPPILIATGGYAHIFEKEQYFDVIISDLLLHGLRIIWQMNK</sequence>
<name>COAX2_FRATT</name>